<organism>
    <name type="scientific">Yersinia pseudotuberculosis serotype O:3 (strain YPIII)</name>
    <dbReference type="NCBI Taxonomy" id="502800"/>
    <lineage>
        <taxon>Bacteria</taxon>
        <taxon>Pseudomonadati</taxon>
        <taxon>Pseudomonadota</taxon>
        <taxon>Gammaproteobacteria</taxon>
        <taxon>Enterobacterales</taxon>
        <taxon>Yersiniaceae</taxon>
        <taxon>Yersinia</taxon>
    </lineage>
</organism>
<protein>
    <recommendedName>
        <fullName>Autoinducer 2-binding protein LsrB</fullName>
        <shortName>AI-2-binding protein LsrB</shortName>
    </recommendedName>
</protein>
<dbReference type="EMBL" id="CP000950">
    <property type="protein sequence ID" value="ACA69920.1"/>
    <property type="molecule type" value="Genomic_DNA"/>
</dbReference>
<dbReference type="RefSeq" id="WP_012105717.1">
    <property type="nucleotide sequence ID" value="NZ_CP009792.1"/>
</dbReference>
<dbReference type="SMR" id="B1JLQ3"/>
<dbReference type="KEGG" id="ypy:YPK_3653"/>
<dbReference type="PATRIC" id="fig|502800.11.peg.4408"/>
<dbReference type="GO" id="GO:0043190">
    <property type="term" value="C:ATP-binding cassette (ABC) transporter complex"/>
    <property type="evidence" value="ECO:0007669"/>
    <property type="project" value="InterPro"/>
</dbReference>
<dbReference type="GO" id="GO:0030288">
    <property type="term" value="C:outer membrane-bounded periplasmic space"/>
    <property type="evidence" value="ECO:0007669"/>
    <property type="project" value="TreeGrafter"/>
</dbReference>
<dbReference type="GO" id="GO:0030246">
    <property type="term" value="F:carbohydrate binding"/>
    <property type="evidence" value="ECO:0007669"/>
    <property type="project" value="TreeGrafter"/>
</dbReference>
<dbReference type="CDD" id="cd20003">
    <property type="entry name" value="PBP1_LsrB_Quorum_Sensing"/>
    <property type="match status" value="1"/>
</dbReference>
<dbReference type="Gene3D" id="3.40.50.2300">
    <property type="match status" value="2"/>
</dbReference>
<dbReference type="InterPro" id="IPR050555">
    <property type="entry name" value="Bact_Solute-Bind_Prot2"/>
</dbReference>
<dbReference type="InterPro" id="IPR030159">
    <property type="entry name" value="LsrB"/>
</dbReference>
<dbReference type="InterPro" id="IPR028082">
    <property type="entry name" value="Peripla_BP_I"/>
</dbReference>
<dbReference type="InterPro" id="IPR025997">
    <property type="entry name" value="SBP_2_dom"/>
</dbReference>
<dbReference type="NCBIfam" id="NF011937">
    <property type="entry name" value="PRK15408.1"/>
    <property type="match status" value="1"/>
</dbReference>
<dbReference type="PANTHER" id="PTHR30036:SF7">
    <property type="entry name" value="ABC TRANSPORTER PERIPLASMIC-BINDING PROTEIN YPHF"/>
    <property type="match status" value="1"/>
</dbReference>
<dbReference type="PANTHER" id="PTHR30036">
    <property type="entry name" value="D-XYLOSE-BINDING PERIPLASMIC PROTEIN"/>
    <property type="match status" value="1"/>
</dbReference>
<dbReference type="Pfam" id="PF13407">
    <property type="entry name" value="Peripla_BP_4"/>
    <property type="match status" value="1"/>
</dbReference>
<dbReference type="SUPFAM" id="SSF53822">
    <property type="entry name" value="Periplasmic binding protein-like I"/>
    <property type="match status" value="1"/>
</dbReference>
<accession>B1JLQ3</accession>
<name>LSRB_YERPY</name>
<feature type="signal peptide" evidence="2">
    <location>
        <begin position="1"/>
        <end position="25"/>
    </location>
</feature>
<feature type="chain" id="PRO_5000315908" description="Autoinducer 2-binding protein LsrB">
    <location>
        <begin position="26"/>
        <end position="339"/>
    </location>
</feature>
<proteinExistence type="inferred from homology"/>
<evidence type="ECO:0000250" key="1"/>
<evidence type="ECO:0000255" key="2"/>
<evidence type="ECO:0000305" key="3"/>
<reference key="1">
    <citation type="submission" date="2008-02" db="EMBL/GenBank/DDBJ databases">
        <title>Complete sequence of Yersinia pseudotuberculosis YPIII.</title>
        <authorList>
            <consortium name="US DOE Joint Genome Institute"/>
            <person name="Copeland A."/>
            <person name="Lucas S."/>
            <person name="Lapidus A."/>
            <person name="Glavina del Rio T."/>
            <person name="Dalin E."/>
            <person name="Tice H."/>
            <person name="Bruce D."/>
            <person name="Goodwin L."/>
            <person name="Pitluck S."/>
            <person name="Munk A.C."/>
            <person name="Brettin T."/>
            <person name="Detter J.C."/>
            <person name="Han C."/>
            <person name="Tapia R."/>
            <person name="Schmutz J."/>
            <person name="Larimer F."/>
            <person name="Land M."/>
            <person name="Hauser L."/>
            <person name="Challacombe J.F."/>
            <person name="Green L."/>
            <person name="Lindler L.E."/>
            <person name="Nikolich M.P."/>
            <person name="Richardson P."/>
        </authorList>
    </citation>
    <scope>NUCLEOTIDE SEQUENCE [LARGE SCALE GENOMIC DNA]</scope>
    <source>
        <strain>YPIII</strain>
    </source>
</reference>
<gene>
    <name type="primary">lsrB</name>
    <name type="ordered locus">YPK_3653</name>
</gene>
<comment type="function">
    <text evidence="1">Part of the ABC transporter complex LsrABCD involved in autoinducer 2 (AI-2) import. Binds AI-2 and delivers it to the LsrC and LsrD permeases (By similarity).</text>
</comment>
<comment type="subunit">
    <text evidence="1">The complex is composed of two ATP-binding proteins (LsrA), two transmembrane proteins (LsrC and LsrD) and a solute-binding protein (LsrB).</text>
</comment>
<comment type="subcellular location">
    <subcellularLocation>
        <location evidence="3">Periplasm</location>
    </subcellularLocation>
</comment>
<comment type="similarity">
    <text evidence="3">Belongs to the bacterial solute-binding protein 2 family.</text>
</comment>
<sequence>MRTQRLKKLALVCALGFACITTAQAAERIAFIPKLVGVGFFTSGGKGAVDAGKALGVDVTYDGPTEPSVSGQVQLINNFVNQGYNAIVVSAVSPDGLCPALKRAMQRGVKILTWDSDTKPECRSVYINQGTPNQLGSMLVDMAANQVKKDQAKVAFFYSSPTVTDQNQWVNEAKKKIQQEHPGWEIVTTQFGYNDATKSLQTAEGILKAYGDLDAIIAPDANALPAAAQAAENLKRANVAIVGFSTPNVMRPYVERGTVKEFGLWDVVNQGKISVYVANEMLKKGDLNVGDKIDIPNIGVVEVSPNRVQGYDYEAKGNGIVLLPQRVIFTKENISKYDF</sequence>
<keyword id="KW-0574">Periplasm</keyword>
<keyword id="KW-0732">Signal</keyword>